<proteinExistence type="inferred from homology"/>
<protein>
    <recommendedName>
        <fullName evidence="1">Probable potassium transport system protein Kup</fullName>
    </recommendedName>
</protein>
<name>KUP_AZOSB</name>
<evidence type="ECO:0000255" key="1">
    <source>
        <dbReference type="HAMAP-Rule" id="MF_01522"/>
    </source>
</evidence>
<evidence type="ECO:0000256" key="2">
    <source>
        <dbReference type="SAM" id="MobiDB-lite"/>
    </source>
</evidence>
<gene>
    <name evidence="1" type="primary">kup</name>
    <name type="ordered locus">azo2272</name>
</gene>
<reference key="1">
    <citation type="journal article" date="2006" name="Nat. Biotechnol.">
        <title>Complete genome of the mutualistic, N2-fixing grass endophyte Azoarcus sp. strain BH72.</title>
        <authorList>
            <person name="Krause A."/>
            <person name="Ramakumar A."/>
            <person name="Bartels D."/>
            <person name="Battistoni F."/>
            <person name="Bekel T."/>
            <person name="Boch J."/>
            <person name="Boehm M."/>
            <person name="Friedrich F."/>
            <person name="Hurek T."/>
            <person name="Krause L."/>
            <person name="Linke B."/>
            <person name="McHardy A.C."/>
            <person name="Sarkar A."/>
            <person name="Schneiker S."/>
            <person name="Syed A.A."/>
            <person name="Thauer R."/>
            <person name="Vorhoelter F.-J."/>
            <person name="Weidner S."/>
            <person name="Puehler A."/>
            <person name="Reinhold-Hurek B."/>
            <person name="Kaiser O."/>
            <person name="Goesmann A."/>
        </authorList>
    </citation>
    <scope>NUCLEOTIDE SEQUENCE [LARGE SCALE GENOMIC DNA]</scope>
    <source>
        <strain>BH72</strain>
    </source>
</reference>
<comment type="function">
    <text evidence="1">Transport of potassium into the cell. Likely operates as a K(+):H(+) symporter.</text>
</comment>
<comment type="catalytic activity">
    <reaction evidence="1">
        <text>K(+)(in) + H(+)(in) = K(+)(out) + H(+)(out)</text>
        <dbReference type="Rhea" id="RHEA:28490"/>
        <dbReference type="ChEBI" id="CHEBI:15378"/>
        <dbReference type="ChEBI" id="CHEBI:29103"/>
    </reaction>
    <physiologicalReaction direction="right-to-left" evidence="1">
        <dbReference type="Rhea" id="RHEA:28492"/>
    </physiologicalReaction>
</comment>
<comment type="subcellular location">
    <subcellularLocation>
        <location evidence="1">Cell inner membrane</location>
        <topology evidence="1">Multi-pass membrane protein</topology>
    </subcellularLocation>
</comment>
<comment type="similarity">
    <text evidence="1">Belongs to the HAK/KUP transporter (TC 2.A.72) family.</text>
</comment>
<dbReference type="EMBL" id="AM406670">
    <property type="protein sequence ID" value="CAL94889.1"/>
    <property type="molecule type" value="Genomic_DNA"/>
</dbReference>
<dbReference type="RefSeq" id="WP_011766003.1">
    <property type="nucleotide sequence ID" value="NC_008702.1"/>
</dbReference>
<dbReference type="STRING" id="62928.azo2272"/>
<dbReference type="KEGG" id="azo:azo2272"/>
<dbReference type="eggNOG" id="COG3158">
    <property type="taxonomic scope" value="Bacteria"/>
</dbReference>
<dbReference type="HOGENOM" id="CLU_008142_4_2_4"/>
<dbReference type="Proteomes" id="UP000002588">
    <property type="component" value="Chromosome"/>
</dbReference>
<dbReference type="GO" id="GO:0005886">
    <property type="term" value="C:plasma membrane"/>
    <property type="evidence" value="ECO:0007669"/>
    <property type="project" value="UniProtKB-SubCell"/>
</dbReference>
<dbReference type="GO" id="GO:0015079">
    <property type="term" value="F:potassium ion transmembrane transporter activity"/>
    <property type="evidence" value="ECO:0007669"/>
    <property type="project" value="UniProtKB-UniRule"/>
</dbReference>
<dbReference type="GO" id="GO:0015293">
    <property type="term" value="F:symporter activity"/>
    <property type="evidence" value="ECO:0007669"/>
    <property type="project" value="UniProtKB-UniRule"/>
</dbReference>
<dbReference type="HAMAP" id="MF_01522">
    <property type="entry name" value="Kup"/>
    <property type="match status" value="1"/>
</dbReference>
<dbReference type="InterPro" id="IPR003855">
    <property type="entry name" value="K+_transporter"/>
</dbReference>
<dbReference type="InterPro" id="IPR053952">
    <property type="entry name" value="K_trans_C"/>
</dbReference>
<dbReference type="InterPro" id="IPR053951">
    <property type="entry name" value="K_trans_N"/>
</dbReference>
<dbReference type="InterPro" id="IPR023051">
    <property type="entry name" value="Kup"/>
</dbReference>
<dbReference type="PANTHER" id="PTHR30540:SF79">
    <property type="entry name" value="LOW AFFINITY POTASSIUM TRANSPORT SYSTEM PROTEIN KUP"/>
    <property type="match status" value="1"/>
</dbReference>
<dbReference type="PANTHER" id="PTHR30540">
    <property type="entry name" value="OSMOTIC STRESS POTASSIUM TRANSPORTER"/>
    <property type="match status" value="1"/>
</dbReference>
<dbReference type="Pfam" id="PF02705">
    <property type="entry name" value="K_trans"/>
    <property type="match status" value="1"/>
</dbReference>
<dbReference type="Pfam" id="PF22776">
    <property type="entry name" value="K_trans_C"/>
    <property type="match status" value="1"/>
</dbReference>
<organism>
    <name type="scientific">Azoarcus sp. (strain BH72)</name>
    <dbReference type="NCBI Taxonomy" id="418699"/>
    <lineage>
        <taxon>Bacteria</taxon>
        <taxon>Pseudomonadati</taxon>
        <taxon>Pseudomonadota</taxon>
        <taxon>Betaproteobacteria</taxon>
        <taxon>Rhodocyclales</taxon>
        <taxon>Zoogloeaceae</taxon>
        <taxon>Azoarcus</taxon>
    </lineage>
</organism>
<accession>A1K7T4</accession>
<feature type="chain" id="PRO_0000279766" description="Probable potassium transport system protein Kup">
    <location>
        <begin position="1"/>
        <end position="638"/>
    </location>
</feature>
<feature type="transmembrane region" description="Helical" evidence="1">
    <location>
        <begin position="24"/>
        <end position="44"/>
    </location>
</feature>
<feature type="transmembrane region" description="Helical" evidence="1">
    <location>
        <begin position="67"/>
        <end position="87"/>
    </location>
</feature>
<feature type="transmembrane region" description="Helical" evidence="1">
    <location>
        <begin position="115"/>
        <end position="135"/>
    </location>
</feature>
<feature type="transmembrane region" description="Helical" evidence="1">
    <location>
        <begin position="153"/>
        <end position="173"/>
    </location>
</feature>
<feature type="transmembrane region" description="Helical" evidence="1">
    <location>
        <begin position="181"/>
        <end position="201"/>
    </location>
</feature>
<feature type="transmembrane region" description="Helical" evidence="1">
    <location>
        <begin position="228"/>
        <end position="248"/>
    </location>
</feature>
<feature type="transmembrane region" description="Helical" evidence="1">
    <location>
        <begin position="263"/>
        <end position="283"/>
    </location>
</feature>
<feature type="transmembrane region" description="Helical" evidence="1">
    <location>
        <begin position="301"/>
        <end position="321"/>
    </location>
</feature>
<feature type="transmembrane region" description="Helical" evidence="1">
    <location>
        <begin position="353"/>
        <end position="373"/>
    </location>
</feature>
<feature type="transmembrane region" description="Helical" evidence="1">
    <location>
        <begin position="382"/>
        <end position="402"/>
    </location>
</feature>
<feature type="transmembrane region" description="Helical" evidence="1">
    <location>
        <begin position="413"/>
        <end position="433"/>
    </location>
</feature>
<feature type="transmembrane region" description="Helical" evidence="1">
    <location>
        <begin position="435"/>
        <end position="455"/>
    </location>
</feature>
<feature type="region of interest" description="Disordered" evidence="2">
    <location>
        <begin position="1"/>
        <end position="20"/>
    </location>
</feature>
<keyword id="KW-0997">Cell inner membrane</keyword>
<keyword id="KW-1003">Cell membrane</keyword>
<keyword id="KW-0406">Ion transport</keyword>
<keyword id="KW-0472">Membrane</keyword>
<keyword id="KW-0630">Potassium</keyword>
<keyword id="KW-0633">Potassium transport</keyword>
<keyword id="KW-1185">Reference proteome</keyword>
<keyword id="KW-0769">Symport</keyword>
<keyword id="KW-0812">Transmembrane</keyword>
<keyword id="KW-1133">Transmembrane helix</keyword>
<keyword id="KW-0813">Transport</keyword>
<sequence length="638" mass="69450">MQVEHEVATEGGQAPASSGHRKGIAGLAVAAIGVVYGDIGTSPLYTLKEVFNGPHAVPVNEANVYGILSLVFWALVTVVSAKYVVFITRADNRGEGGIMALTSLALRVVQPGRRAWWLSVLGVFGAALFYGDGMITPAISVLSAVEGLEVATPAFKPFVIPIALVVLVGLFVMQRRGTGSVGAIFGPVMVCWFLVLAVLGINGITLHPEIIGALDPRWAARFFIDQPLIGWLALGAVVLAITGGEALYADMGHFGRRPIKLAWFSLVFPALYLNYLGQGALILDHPDNVRNPFYMLVPDALVYPMVGMATLATIIASQAVISGAFSLTRQAIQLGYAPRMQTLHTSEHEIGQIYVPGVNWMLLGAVVALVVGFQSSSALASAYGIAVTLTMMIDTVLAFVVVRSLWKWGRAKAVLFLVVFLAVDIAFFSATTVKIFAGGWFPLLIGAAIFTLLRTWKRGRSLLNERIRSDTMPLDIFIQSMFQSPPPRVEGTAVFMTTWLDGVPRALLHNLIHNKVLHERVVLLRVDTADVPHVPEGERVEVEEIDYGFYRVRVHYGFKDDPDIPAALGLCAQRGLPFDMMETSFFLGRETLVSRVGSGMPQWREKLFILLFRNAGSAADYFCIPPNRVVELGTQVEL</sequence>